<keyword id="KW-0488">Methylation</keyword>
<keyword id="KW-0687">Ribonucleoprotein</keyword>
<keyword id="KW-0689">Ribosomal protein</keyword>
<keyword id="KW-0694">RNA-binding</keyword>
<keyword id="KW-0699">rRNA-binding</keyword>
<feature type="chain" id="PRO_1000195733" description="Large ribosomal subunit protein uL11">
    <location>
        <begin position="1"/>
        <end position="145"/>
    </location>
</feature>
<protein>
    <recommendedName>
        <fullName evidence="1">Large ribosomal subunit protein uL11</fullName>
    </recommendedName>
    <alternativeName>
        <fullName evidence="2">50S ribosomal protein L11</fullName>
    </alternativeName>
</protein>
<sequence length="145" mass="15546">MAKKVTGQVELMIPAQQAAPSPPVGPALGQHGVNIMEFVKSFNAATANMKPGTIVPVVITIYSDRSFTFILKTPPASYLLKEAAGIKTGSGDPKRNKVGKITVNQLREIAEMKLKDLNTEDIEMAMRTIAGTARSMGIEIEGYKG</sequence>
<name>RL11_SULSY</name>
<organism>
    <name type="scientific">Sulfurihydrogenibium sp. (strain YO3AOP1)</name>
    <dbReference type="NCBI Taxonomy" id="436114"/>
    <lineage>
        <taxon>Bacteria</taxon>
        <taxon>Pseudomonadati</taxon>
        <taxon>Aquificota</taxon>
        <taxon>Aquificia</taxon>
        <taxon>Aquificales</taxon>
        <taxon>Hydrogenothermaceae</taxon>
        <taxon>Sulfurihydrogenibium</taxon>
    </lineage>
</organism>
<gene>
    <name evidence="1" type="primary">rplK</name>
    <name type="ordered locus">SYO3AOP1_0302</name>
</gene>
<accession>B2V7M4</accession>
<evidence type="ECO:0000255" key="1">
    <source>
        <dbReference type="HAMAP-Rule" id="MF_00736"/>
    </source>
</evidence>
<evidence type="ECO:0000305" key="2"/>
<reference key="1">
    <citation type="journal article" date="2009" name="J. Bacteriol.">
        <title>Complete and draft genome sequences of six members of the Aquificales.</title>
        <authorList>
            <person name="Reysenbach A.-L."/>
            <person name="Hamamura N."/>
            <person name="Podar M."/>
            <person name="Griffiths E."/>
            <person name="Ferreira S."/>
            <person name="Hochstein R."/>
            <person name="Heidelberg J."/>
            <person name="Johnson J."/>
            <person name="Mead D."/>
            <person name="Pohorille A."/>
            <person name="Sarmiento M."/>
            <person name="Schweighofer K."/>
            <person name="Seshadri R."/>
            <person name="Voytek M.A."/>
        </authorList>
    </citation>
    <scope>NUCLEOTIDE SEQUENCE [LARGE SCALE GENOMIC DNA]</scope>
    <source>
        <strain>YO3AOP1</strain>
    </source>
</reference>
<proteinExistence type="inferred from homology"/>
<comment type="function">
    <text evidence="1">Forms part of the ribosomal stalk which helps the ribosome interact with GTP-bound translation factors.</text>
</comment>
<comment type="subunit">
    <text evidence="1">Part of the ribosomal stalk of the 50S ribosomal subunit. Interacts with L10 and the large rRNA to form the base of the stalk. L10 forms an elongated spine to which L12 dimers bind in a sequential fashion forming a multimeric L10(L12)X complex.</text>
</comment>
<comment type="PTM">
    <text evidence="1">One or more lysine residues are methylated.</text>
</comment>
<comment type="similarity">
    <text evidence="1">Belongs to the universal ribosomal protein uL11 family.</text>
</comment>
<dbReference type="EMBL" id="CP001080">
    <property type="protein sequence ID" value="ACD65947.1"/>
    <property type="molecule type" value="Genomic_DNA"/>
</dbReference>
<dbReference type="RefSeq" id="WP_012459035.1">
    <property type="nucleotide sequence ID" value="NC_010730.1"/>
</dbReference>
<dbReference type="SMR" id="B2V7M4"/>
<dbReference type="STRING" id="436114.SYO3AOP1_0302"/>
<dbReference type="KEGG" id="sul:SYO3AOP1_0302"/>
<dbReference type="eggNOG" id="COG0080">
    <property type="taxonomic scope" value="Bacteria"/>
</dbReference>
<dbReference type="HOGENOM" id="CLU_074237_2_1_0"/>
<dbReference type="GO" id="GO:0022625">
    <property type="term" value="C:cytosolic large ribosomal subunit"/>
    <property type="evidence" value="ECO:0007669"/>
    <property type="project" value="TreeGrafter"/>
</dbReference>
<dbReference type="GO" id="GO:0070180">
    <property type="term" value="F:large ribosomal subunit rRNA binding"/>
    <property type="evidence" value="ECO:0007669"/>
    <property type="project" value="UniProtKB-UniRule"/>
</dbReference>
<dbReference type="GO" id="GO:0003735">
    <property type="term" value="F:structural constituent of ribosome"/>
    <property type="evidence" value="ECO:0007669"/>
    <property type="project" value="InterPro"/>
</dbReference>
<dbReference type="GO" id="GO:0006412">
    <property type="term" value="P:translation"/>
    <property type="evidence" value="ECO:0007669"/>
    <property type="project" value="UniProtKB-UniRule"/>
</dbReference>
<dbReference type="CDD" id="cd00349">
    <property type="entry name" value="Ribosomal_L11"/>
    <property type="match status" value="1"/>
</dbReference>
<dbReference type="FunFam" id="1.10.10.250:FF:000001">
    <property type="entry name" value="50S ribosomal protein L11"/>
    <property type="match status" value="1"/>
</dbReference>
<dbReference type="FunFam" id="3.30.1550.10:FF:000005">
    <property type="entry name" value="50S ribosomal protein L11"/>
    <property type="match status" value="1"/>
</dbReference>
<dbReference type="Gene3D" id="1.10.10.250">
    <property type="entry name" value="Ribosomal protein L11, C-terminal domain"/>
    <property type="match status" value="1"/>
</dbReference>
<dbReference type="Gene3D" id="3.30.1550.10">
    <property type="entry name" value="Ribosomal protein L11/L12, N-terminal domain"/>
    <property type="match status" value="1"/>
</dbReference>
<dbReference type="HAMAP" id="MF_00736">
    <property type="entry name" value="Ribosomal_uL11"/>
    <property type="match status" value="1"/>
</dbReference>
<dbReference type="InterPro" id="IPR000911">
    <property type="entry name" value="Ribosomal_uL11"/>
</dbReference>
<dbReference type="InterPro" id="IPR006519">
    <property type="entry name" value="Ribosomal_uL11_bac-typ"/>
</dbReference>
<dbReference type="InterPro" id="IPR020783">
    <property type="entry name" value="Ribosomal_uL11_C"/>
</dbReference>
<dbReference type="InterPro" id="IPR036769">
    <property type="entry name" value="Ribosomal_uL11_C_sf"/>
</dbReference>
<dbReference type="InterPro" id="IPR020785">
    <property type="entry name" value="Ribosomal_uL11_CS"/>
</dbReference>
<dbReference type="InterPro" id="IPR020784">
    <property type="entry name" value="Ribosomal_uL11_N"/>
</dbReference>
<dbReference type="InterPro" id="IPR036796">
    <property type="entry name" value="Ribosomal_uL11_N_sf"/>
</dbReference>
<dbReference type="NCBIfam" id="TIGR01632">
    <property type="entry name" value="L11_bact"/>
    <property type="match status" value="1"/>
</dbReference>
<dbReference type="PANTHER" id="PTHR11661">
    <property type="entry name" value="60S RIBOSOMAL PROTEIN L12"/>
    <property type="match status" value="1"/>
</dbReference>
<dbReference type="PANTHER" id="PTHR11661:SF1">
    <property type="entry name" value="LARGE RIBOSOMAL SUBUNIT PROTEIN UL11M"/>
    <property type="match status" value="1"/>
</dbReference>
<dbReference type="Pfam" id="PF00298">
    <property type="entry name" value="Ribosomal_L11"/>
    <property type="match status" value="1"/>
</dbReference>
<dbReference type="Pfam" id="PF03946">
    <property type="entry name" value="Ribosomal_L11_N"/>
    <property type="match status" value="1"/>
</dbReference>
<dbReference type="SMART" id="SM00649">
    <property type="entry name" value="RL11"/>
    <property type="match status" value="1"/>
</dbReference>
<dbReference type="SUPFAM" id="SSF54747">
    <property type="entry name" value="Ribosomal L11/L12e N-terminal domain"/>
    <property type="match status" value="1"/>
</dbReference>
<dbReference type="SUPFAM" id="SSF46906">
    <property type="entry name" value="Ribosomal protein L11, C-terminal domain"/>
    <property type="match status" value="1"/>
</dbReference>
<dbReference type="PROSITE" id="PS00359">
    <property type="entry name" value="RIBOSOMAL_L11"/>
    <property type="match status" value="1"/>
</dbReference>